<keyword id="KW-0997">Cell inner membrane</keyword>
<keyword id="KW-1003">Cell membrane</keyword>
<keyword id="KW-0472">Membrane</keyword>
<keyword id="KW-0520">NAD</keyword>
<keyword id="KW-0874">Quinone</keyword>
<keyword id="KW-1185">Reference proteome</keyword>
<keyword id="KW-1278">Translocase</keyword>
<keyword id="KW-0812">Transmembrane</keyword>
<keyword id="KW-1133">Transmembrane helix</keyword>
<keyword id="KW-0813">Transport</keyword>
<keyword id="KW-0830">Ubiquinone</keyword>
<feature type="chain" id="PRO_0000362704" description="NADH-quinone oxidoreductase subunit A">
    <location>
        <begin position="1"/>
        <end position="123"/>
    </location>
</feature>
<feature type="transmembrane region" description="Helical" evidence="1">
    <location>
        <begin position="6"/>
        <end position="26"/>
    </location>
</feature>
<feature type="transmembrane region" description="Helical" evidence="1">
    <location>
        <begin position="66"/>
        <end position="86"/>
    </location>
</feature>
<feature type="transmembrane region" description="Helical" evidence="1">
    <location>
        <begin position="93"/>
        <end position="113"/>
    </location>
</feature>
<dbReference type="EC" id="7.1.1.-" evidence="1"/>
<dbReference type="EMBL" id="CP000113">
    <property type="protein sequence ID" value="ABF91635.1"/>
    <property type="molecule type" value="Genomic_DNA"/>
</dbReference>
<dbReference type="RefSeq" id="WP_011552801.1">
    <property type="nucleotide sequence ID" value="NC_008095.1"/>
</dbReference>
<dbReference type="SMR" id="Q1D8S2"/>
<dbReference type="STRING" id="246197.MXAN_2734"/>
<dbReference type="EnsemblBacteria" id="ABF91635">
    <property type="protein sequence ID" value="ABF91635"/>
    <property type="gene ID" value="MXAN_2734"/>
</dbReference>
<dbReference type="GeneID" id="41360111"/>
<dbReference type="KEGG" id="mxa:MXAN_2734"/>
<dbReference type="eggNOG" id="COG0838">
    <property type="taxonomic scope" value="Bacteria"/>
</dbReference>
<dbReference type="HOGENOM" id="CLU_119549_0_2_7"/>
<dbReference type="OrthoDB" id="9791970at2"/>
<dbReference type="Proteomes" id="UP000002402">
    <property type="component" value="Chromosome"/>
</dbReference>
<dbReference type="GO" id="GO:0030964">
    <property type="term" value="C:NADH dehydrogenase complex"/>
    <property type="evidence" value="ECO:0007669"/>
    <property type="project" value="TreeGrafter"/>
</dbReference>
<dbReference type="GO" id="GO:0005886">
    <property type="term" value="C:plasma membrane"/>
    <property type="evidence" value="ECO:0007669"/>
    <property type="project" value="UniProtKB-SubCell"/>
</dbReference>
<dbReference type="GO" id="GO:0008137">
    <property type="term" value="F:NADH dehydrogenase (ubiquinone) activity"/>
    <property type="evidence" value="ECO:0007669"/>
    <property type="project" value="InterPro"/>
</dbReference>
<dbReference type="GO" id="GO:0050136">
    <property type="term" value="F:NADH:ubiquinone reductase (non-electrogenic) activity"/>
    <property type="evidence" value="ECO:0007669"/>
    <property type="project" value="UniProtKB-UniRule"/>
</dbReference>
<dbReference type="GO" id="GO:0048038">
    <property type="term" value="F:quinone binding"/>
    <property type="evidence" value="ECO:0007669"/>
    <property type="project" value="UniProtKB-KW"/>
</dbReference>
<dbReference type="Gene3D" id="1.20.58.1610">
    <property type="entry name" value="NADH:ubiquinone/plastoquinone oxidoreductase, chain 3"/>
    <property type="match status" value="1"/>
</dbReference>
<dbReference type="HAMAP" id="MF_01394">
    <property type="entry name" value="NDH1_NuoA"/>
    <property type="match status" value="1"/>
</dbReference>
<dbReference type="InterPro" id="IPR023043">
    <property type="entry name" value="NAD(P)H_OxRDtase_bac/plastid"/>
</dbReference>
<dbReference type="InterPro" id="IPR000440">
    <property type="entry name" value="NADH_UbQ/plastoQ_OxRdtase_su3"/>
</dbReference>
<dbReference type="InterPro" id="IPR038430">
    <property type="entry name" value="NDAH_ubi_oxred_su3_sf"/>
</dbReference>
<dbReference type="PANTHER" id="PTHR11058:SF22">
    <property type="entry name" value="NADH-QUINONE OXIDOREDUCTASE SUBUNIT A"/>
    <property type="match status" value="1"/>
</dbReference>
<dbReference type="PANTHER" id="PTHR11058">
    <property type="entry name" value="NADH-UBIQUINONE OXIDOREDUCTASE CHAIN 3"/>
    <property type="match status" value="1"/>
</dbReference>
<dbReference type="Pfam" id="PF00507">
    <property type="entry name" value="Oxidored_q4"/>
    <property type="match status" value="1"/>
</dbReference>
<name>NUOA_MYXXD</name>
<organism>
    <name type="scientific">Myxococcus xanthus (strain DK1622)</name>
    <dbReference type="NCBI Taxonomy" id="246197"/>
    <lineage>
        <taxon>Bacteria</taxon>
        <taxon>Pseudomonadati</taxon>
        <taxon>Myxococcota</taxon>
        <taxon>Myxococcia</taxon>
        <taxon>Myxococcales</taxon>
        <taxon>Cystobacterineae</taxon>
        <taxon>Myxococcaceae</taxon>
        <taxon>Myxococcus</taxon>
    </lineage>
</organism>
<sequence length="123" mass="13586">MTPTPLTPYLPLAVVLLLAGGMAMLIPQITTRLGPRRPSAIKATSFEAGSESSGPARQRFAVKFYVVALLFIVFDVEAVFLYPWAVNFQALGWFGYVEMLVFAVTLVVGLIYIWKKGALDWES</sequence>
<gene>
    <name evidence="1" type="primary">nuoA</name>
    <name type="ordered locus">MXAN_2734</name>
</gene>
<evidence type="ECO:0000255" key="1">
    <source>
        <dbReference type="HAMAP-Rule" id="MF_01394"/>
    </source>
</evidence>
<protein>
    <recommendedName>
        <fullName evidence="1">NADH-quinone oxidoreductase subunit A</fullName>
        <ecNumber evidence="1">7.1.1.-</ecNumber>
    </recommendedName>
    <alternativeName>
        <fullName evidence="1">NADH dehydrogenase I subunit A</fullName>
    </alternativeName>
    <alternativeName>
        <fullName evidence="1">NDH-1 subunit A</fullName>
    </alternativeName>
    <alternativeName>
        <fullName evidence="1">NUO1</fullName>
    </alternativeName>
</protein>
<accession>Q1D8S2</accession>
<proteinExistence type="inferred from homology"/>
<comment type="function">
    <text evidence="1">NDH-1 shuttles electrons from NADH, via FMN and iron-sulfur (Fe-S) centers, to quinones in the respiratory chain. The immediate electron acceptor for the enzyme in this species is believed to be ubiquinone. Couples the redox reaction to proton translocation (for every two electrons transferred, four hydrogen ions are translocated across the cytoplasmic membrane), and thus conserves the redox energy in a proton gradient.</text>
</comment>
<comment type="catalytic activity">
    <reaction evidence="1">
        <text>a quinone + NADH + 5 H(+)(in) = a quinol + NAD(+) + 4 H(+)(out)</text>
        <dbReference type="Rhea" id="RHEA:57888"/>
        <dbReference type="ChEBI" id="CHEBI:15378"/>
        <dbReference type="ChEBI" id="CHEBI:24646"/>
        <dbReference type="ChEBI" id="CHEBI:57540"/>
        <dbReference type="ChEBI" id="CHEBI:57945"/>
        <dbReference type="ChEBI" id="CHEBI:132124"/>
    </reaction>
</comment>
<comment type="subunit">
    <text evidence="1">NDH-1 is composed of 14 different subunits. Subunits NuoA, H, J, K, L, M, N constitute the membrane sector of the complex.</text>
</comment>
<comment type="subcellular location">
    <subcellularLocation>
        <location evidence="1">Cell inner membrane</location>
        <topology evidence="1">Multi-pass membrane protein</topology>
    </subcellularLocation>
</comment>
<comment type="similarity">
    <text evidence="1">Belongs to the complex I subunit 3 family.</text>
</comment>
<reference key="1">
    <citation type="journal article" date="2006" name="Proc. Natl. Acad. Sci. U.S.A.">
        <title>Evolution of sensory complexity recorded in a myxobacterial genome.</title>
        <authorList>
            <person name="Goldman B.S."/>
            <person name="Nierman W.C."/>
            <person name="Kaiser D."/>
            <person name="Slater S.C."/>
            <person name="Durkin A.S."/>
            <person name="Eisen J.A."/>
            <person name="Ronning C.M."/>
            <person name="Barbazuk W.B."/>
            <person name="Blanchard M."/>
            <person name="Field C."/>
            <person name="Halling C."/>
            <person name="Hinkle G."/>
            <person name="Iartchuk O."/>
            <person name="Kim H.S."/>
            <person name="Mackenzie C."/>
            <person name="Madupu R."/>
            <person name="Miller N."/>
            <person name="Shvartsbeyn A."/>
            <person name="Sullivan S.A."/>
            <person name="Vaudin M."/>
            <person name="Wiegand R."/>
            <person name="Kaplan H.B."/>
        </authorList>
    </citation>
    <scope>NUCLEOTIDE SEQUENCE [LARGE SCALE GENOMIC DNA]</scope>
    <source>
        <strain>DK1622</strain>
    </source>
</reference>